<organism>
    <name type="scientific">Burkholderia mallei (strain SAVP1)</name>
    <dbReference type="NCBI Taxonomy" id="320388"/>
    <lineage>
        <taxon>Bacteria</taxon>
        <taxon>Pseudomonadati</taxon>
        <taxon>Pseudomonadota</taxon>
        <taxon>Betaproteobacteria</taxon>
        <taxon>Burkholderiales</taxon>
        <taxon>Burkholderiaceae</taxon>
        <taxon>Burkholderia</taxon>
        <taxon>pseudomallei group</taxon>
    </lineage>
</organism>
<keyword id="KW-0378">Hydrolase</keyword>
<comment type="function">
    <text evidence="1">Hydrolyzes diadenosine 5',5'''-P1,P4-tetraphosphate to yield ADP.</text>
</comment>
<comment type="catalytic activity">
    <reaction evidence="1">
        <text>P(1),P(4)-bis(5'-adenosyl) tetraphosphate + H2O = 2 ADP + 2 H(+)</text>
        <dbReference type="Rhea" id="RHEA:24252"/>
        <dbReference type="ChEBI" id="CHEBI:15377"/>
        <dbReference type="ChEBI" id="CHEBI:15378"/>
        <dbReference type="ChEBI" id="CHEBI:58141"/>
        <dbReference type="ChEBI" id="CHEBI:456216"/>
        <dbReference type="EC" id="3.6.1.41"/>
    </reaction>
</comment>
<comment type="similarity">
    <text evidence="1">Belongs to the Ap4A hydrolase family.</text>
</comment>
<sequence length="282" mass="30572">MTNFSSSPPIAFGDLQGCHAAYRQLFDTLAPAADTPLWFAGDLVNRGPASLATLREIAALGERAIAVLGNHDLHLLAVAAGIRTLKPGDTIGEILDAPDADDLIEWVRHRPFAHFERGMLMVHAGLLPQWDAALALELADELQRALRASNWRDTLRSLYGNDPNCWSPDLKHADRLRVAFNAFTRIRFCTPEGAMEFRANGGPAAAPAGYLPWFDAPGRKTADVTVVFGHWAALGLMLRENLVALDSGCVWGNRLSAVRLADDPAARVVTQVACERCGAADE</sequence>
<protein>
    <recommendedName>
        <fullName evidence="1">Bis(5'-nucleosyl)-tetraphosphatase, symmetrical</fullName>
        <ecNumber evidence="1">3.6.1.41</ecNumber>
    </recommendedName>
    <alternativeName>
        <fullName evidence="1">Ap4A hydrolase</fullName>
    </alternativeName>
    <alternativeName>
        <fullName evidence="1">Diadenosine 5',5'''-P1,P4-tetraphosphate pyrophosphohydrolase</fullName>
    </alternativeName>
    <alternativeName>
        <fullName evidence="1">Diadenosine tetraphosphatase</fullName>
    </alternativeName>
</protein>
<dbReference type="EC" id="3.6.1.41" evidence="1"/>
<dbReference type="EMBL" id="CP000526">
    <property type="protein sequence ID" value="ABM51105.1"/>
    <property type="molecule type" value="Genomic_DNA"/>
</dbReference>
<dbReference type="RefSeq" id="WP_004186146.1">
    <property type="nucleotide sequence ID" value="NC_008785.1"/>
</dbReference>
<dbReference type="SMR" id="A1V209"/>
<dbReference type="KEGG" id="bmv:BMASAVP1_A0922"/>
<dbReference type="HOGENOM" id="CLU_056184_1_0_4"/>
<dbReference type="GO" id="GO:0008803">
    <property type="term" value="F:bis(5'-nucleosyl)-tetraphosphatase (symmetrical) activity"/>
    <property type="evidence" value="ECO:0007669"/>
    <property type="project" value="UniProtKB-UniRule"/>
</dbReference>
<dbReference type="CDD" id="cd07422">
    <property type="entry name" value="MPP_ApaH"/>
    <property type="match status" value="1"/>
</dbReference>
<dbReference type="Gene3D" id="3.60.21.10">
    <property type="match status" value="1"/>
</dbReference>
<dbReference type="HAMAP" id="MF_00199">
    <property type="entry name" value="ApaH"/>
    <property type="match status" value="1"/>
</dbReference>
<dbReference type="InterPro" id="IPR004617">
    <property type="entry name" value="ApaH"/>
</dbReference>
<dbReference type="InterPro" id="IPR004843">
    <property type="entry name" value="Calcineurin-like_PHP_ApaH"/>
</dbReference>
<dbReference type="InterPro" id="IPR029052">
    <property type="entry name" value="Metallo-depent_PP-like"/>
</dbReference>
<dbReference type="NCBIfam" id="TIGR00668">
    <property type="entry name" value="apaH"/>
    <property type="match status" value="1"/>
</dbReference>
<dbReference type="NCBIfam" id="NF001204">
    <property type="entry name" value="PRK00166.1"/>
    <property type="match status" value="1"/>
</dbReference>
<dbReference type="PANTHER" id="PTHR40942">
    <property type="match status" value="1"/>
</dbReference>
<dbReference type="PANTHER" id="PTHR40942:SF4">
    <property type="entry name" value="CYTOCHROME C5"/>
    <property type="match status" value="1"/>
</dbReference>
<dbReference type="Pfam" id="PF00149">
    <property type="entry name" value="Metallophos"/>
    <property type="match status" value="1"/>
</dbReference>
<dbReference type="PIRSF" id="PIRSF000903">
    <property type="entry name" value="B5n-ttraPtase_sm"/>
    <property type="match status" value="1"/>
</dbReference>
<dbReference type="SUPFAM" id="SSF56300">
    <property type="entry name" value="Metallo-dependent phosphatases"/>
    <property type="match status" value="1"/>
</dbReference>
<reference key="1">
    <citation type="journal article" date="2010" name="Genome Biol. Evol.">
        <title>Continuing evolution of Burkholderia mallei through genome reduction and large-scale rearrangements.</title>
        <authorList>
            <person name="Losada L."/>
            <person name="Ronning C.M."/>
            <person name="DeShazer D."/>
            <person name="Woods D."/>
            <person name="Fedorova N."/>
            <person name="Kim H.S."/>
            <person name="Shabalina S.A."/>
            <person name="Pearson T.R."/>
            <person name="Brinkac L."/>
            <person name="Tan P."/>
            <person name="Nandi T."/>
            <person name="Crabtree J."/>
            <person name="Badger J."/>
            <person name="Beckstrom-Sternberg S."/>
            <person name="Saqib M."/>
            <person name="Schutzer S.E."/>
            <person name="Keim P."/>
            <person name="Nierman W.C."/>
        </authorList>
    </citation>
    <scope>NUCLEOTIDE SEQUENCE [LARGE SCALE GENOMIC DNA]</scope>
    <source>
        <strain>SAVP1</strain>
    </source>
</reference>
<accession>A1V209</accession>
<proteinExistence type="inferred from homology"/>
<feature type="chain" id="PRO_1000012048" description="Bis(5'-nucleosyl)-tetraphosphatase, symmetrical">
    <location>
        <begin position="1"/>
        <end position="282"/>
    </location>
</feature>
<name>APAH_BURMS</name>
<gene>
    <name evidence="1" type="primary">apaH</name>
    <name type="ordered locus">BMASAVP1_A0922</name>
</gene>
<evidence type="ECO:0000255" key="1">
    <source>
        <dbReference type="HAMAP-Rule" id="MF_00199"/>
    </source>
</evidence>